<name>TCF21_HUMAN</name>
<accession>O43680</accession>
<accession>E1P581</accession>
<accession>O43545</accession>
<accession>Q6ICV0</accession>
<accession>Q9BZ14</accession>
<comment type="function">
    <text>Involved in epithelial-mesenchymal interactions in kidney and lung morphogenesis that include epithelial differentiation and branching morphogenesis. May play a role in the specification or differentiation of one or more subsets of epicardial cell types.</text>
</comment>
<comment type="subunit">
    <text>Efficient DNA binding requires dimerization with another bHLH protein. Forms a heterodimer with TCF3 and binds the E box (5'-CANNTG-3').</text>
</comment>
<comment type="interaction">
    <interactant intactId="EBI-723267">
        <id>O43680</id>
    </interactant>
    <interactant intactId="EBI-77613">
        <id>P05067</id>
        <label>APP</label>
    </interactant>
    <organismsDiffer>false</organismsDiffer>
    <experiments>3</experiments>
</comment>
<comment type="interaction">
    <interactant intactId="EBI-723267">
        <id>O43680</id>
    </interactant>
    <interactant intactId="EBI-488878">
        <id>P15172</id>
        <label>MYOD1</label>
    </interactant>
    <organismsDiffer>false</organismsDiffer>
    <experiments>3</experiments>
</comment>
<comment type="interaction">
    <interactant intactId="EBI-723267">
        <id>O43680</id>
    </interactant>
    <interactant intactId="EBI-727004">
        <id>O00560</id>
        <label>SDCBP</label>
    </interactant>
    <organismsDiffer>false</organismsDiffer>
    <experiments>3</experiments>
</comment>
<comment type="interaction">
    <interactant intactId="EBI-723267">
        <id>O43680</id>
    </interactant>
    <interactant intactId="EBI-11952764">
        <id>Q99081-3</id>
        <label>TCF12</label>
    </interactant>
    <organismsDiffer>false</organismsDiffer>
    <experiments>3</experiments>
</comment>
<comment type="subcellular location">
    <subcellularLocation>
        <location>Nucleus</location>
    </subcellularLocation>
</comment>
<proteinExistence type="evidence at protein level"/>
<keyword id="KW-0238">DNA-binding</keyword>
<keyword id="KW-0539">Nucleus</keyword>
<keyword id="KW-1267">Proteomics identification</keyword>
<keyword id="KW-1185">Reference proteome</keyword>
<keyword id="KW-0804">Transcription</keyword>
<keyword id="KW-0805">Transcription regulation</keyword>
<sequence length="179" mass="19715">MSTGSLSDVEDLQEVEMLECDGLKMDSNKEFVTSNESTEESSNCENGSPQKGRGGLGKRRKAPTKKSPLSGVSQEGKQVQRNAANARERARMRVLSKAFSRLKTTLPWVPPDTKLSKLDTLRLASSYIAHLRQILANDKYENGYIHPVNLTWPFMVAGKPESDLKEVVTASRLCGTTAS</sequence>
<organism>
    <name type="scientific">Homo sapiens</name>
    <name type="common">Human</name>
    <dbReference type="NCBI Taxonomy" id="9606"/>
    <lineage>
        <taxon>Eukaryota</taxon>
        <taxon>Metazoa</taxon>
        <taxon>Chordata</taxon>
        <taxon>Craniata</taxon>
        <taxon>Vertebrata</taxon>
        <taxon>Euteleostomi</taxon>
        <taxon>Mammalia</taxon>
        <taxon>Eutheria</taxon>
        <taxon>Euarchontoglires</taxon>
        <taxon>Primates</taxon>
        <taxon>Haplorrhini</taxon>
        <taxon>Catarrhini</taxon>
        <taxon>Hominidae</taxon>
        <taxon>Homo</taxon>
    </lineage>
</organism>
<reference key="1">
    <citation type="journal article" date="1998" name="Dev. Dyn.">
        <title>Epicardin: a novel basic helix-loop-helix transcription factor gene expressed in epicardium, branchial arch myoblasts, and mesenchyme of developing lung, gut, kidney, and gonads.</title>
        <authorList>
            <person name="Robb L."/>
            <person name="Mifsud L."/>
            <person name="Hartley L."/>
            <person name="Biben C."/>
            <person name="Copeland N.G."/>
            <person name="Gilbert D.J."/>
            <person name="Jenkins N.A."/>
            <person name="Harvey R.P."/>
        </authorList>
    </citation>
    <scope>NUCLEOTIDE SEQUENCE [MRNA]</scope>
    <source>
        <tissue>Placenta</tissue>
    </source>
</reference>
<reference key="2">
    <citation type="journal article" date="1999" name="Development">
        <title>The basic-helix-loop-helix protein pod1 is critically important for kidney and lung organogenesis.</title>
        <authorList>
            <person name="Quaggin S.E."/>
            <person name="Schwartz L."/>
            <person name="Cui S."/>
            <person name="Igarashi P."/>
            <person name="Deimling J."/>
            <person name="Post M."/>
            <person name="Rossant J."/>
        </authorList>
    </citation>
    <scope>NUCLEOTIDE SEQUENCE [GENOMIC DNA]</scope>
</reference>
<reference key="3">
    <citation type="submission" date="2004-10" db="EMBL/GenBank/DDBJ databases">
        <title>Cloning of human full-length CDSs in BD Creator(TM) system donor vector.</title>
        <authorList>
            <person name="Kalnine N."/>
            <person name="Chen X."/>
            <person name="Rolfs A."/>
            <person name="Halleck A."/>
            <person name="Hines L."/>
            <person name="Eisenstein S."/>
            <person name="Koundinya M."/>
            <person name="Raphael J."/>
            <person name="Moreira D."/>
            <person name="Kelley T."/>
            <person name="LaBaer J."/>
            <person name="Lin Y."/>
            <person name="Phelan M."/>
            <person name="Farmer A."/>
        </authorList>
    </citation>
    <scope>NUCLEOTIDE SEQUENCE [LARGE SCALE MRNA]</scope>
</reference>
<reference key="4">
    <citation type="submission" date="2004-05" db="EMBL/GenBank/DDBJ databases">
        <title>Cloning of human full open reading frames in Gateway(TM) system entry vector (pDONR201).</title>
        <authorList>
            <person name="Ebert L."/>
            <person name="Schick M."/>
            <person name="Neubert P."/>
            <person name="Schatten R."/>
            <person name="Henze S."/>
            <person name="Korn B."/>
        </authorList>
    </citation>
    <scope>NUCLEOTIDE SEQUENCE [LARGE SCALE MRNA]</scope>
</reference>
<reference key="5">
    <citation type="journal article" date="2003" name="Nature">
        <title>The DNA sequence and analysis of human chromosome 6.</title>
        <authorList>
            <person name="Mungall A.J."/>
            <person name="Palmer S.A."/>
            <person name="Sims S.K."/>
            <person name="Edwards C.A."/>
            <person name="Ashurst J.L."/>
            <person name="Wilming L."/>
            <person name="Jones M.C."/>
            <person name="Horton R."/>
            <person name="Hunt S.E."/>
            <person name="Scott C.E."/>
            <person name="Gilbert J.G.R."/>
            <person name="Clamp M.E."/>
            <person name="Bethel G."/>
            <person name="Milne S."/>
            <person name="Ainscough R."/>
            <person name="Almeida J.P."/>
            <person name="Ambrose K.D."/>
            <person name="Andrews T.D."/>
            <person name="Ashwell R.I.S."/>
            <person name="Babbage A.K."/>
            <person name="Bagguley C.L."/>
            <person name="Bailey J."/>
            <person name="Banerjee R."/>
            <person name="Barker D.J."/>
            <person name="Barlow K.F."/>
            <person name="Bates K."/>
            <person name="Beare D.M."/>
            <person name="Beasley H."/>
            <person name="Beasley O."/>
            <person name="Bird C.P."/>
            <person name="Blakey S.E."/>
            <person name="Bray-Allen S."/>
            <person name="Brook J."/>
            <person name="Brown A.J."/>
            <person name="Brown J.Y."/>
            <person name="Burford D.C."/>
            <person name="Burrill W."/>
            <person name="Burton J."/>
            <person name="Carder C."/>
            <person name="Carter N.P."/>
            <person name="Chapman J.C."/>
            <person name="Clark S.Y."/>
            <person name="Clark G."/>
            <person name="Clee C.M."/>
            <person name="Clegg S."/>
            <person name="Cobley V."/>
            <person name="Collier R.E."/>
            <person name="Collins J.E."/>
            <person name="Colman L.K."/>
            <person name="Corby N.R."/>
            <person name="Coville G.J."/>
            <person name="Culley K.M."/>
            <person name="Dhami P."/>
            <person name="Davies J."/>
            <person name="Dunn M."/>
            <person name="Earthrowl M.E."/>
            <person name="Ellington A.E."/>
            <person name="Evans K.A."/>
            <person name="Faulkner L."/>
            <person name="Francis M.D."/>
            <person name="Frankish A."/>
            <person name="Frankland J."/>
            <person name="French L."/>
            <person name="Garner P."/>
            <person name="Garnett J."/>
            <person name="Ghori M.J."/>
            <person name="Gilby L.M."/>
            <person name="Gillson C.J."/>
            <person name="Glithero R.J."/>
            <person name="Grafham D.V."/>
            <person name="Grant M."/>
            <person name="Gribble S."/>
            <person name="Griffiths C."/>
            <person name="Griffiths M.N.D."/>
            <person name="Hall R."/>
            <person name="Halls K.S."/>
            <person name="Hammond S."/>
            <person name="Harley J.L."/>
            <person name="Hart E.A."/>
            <person name="Heath P.D."/>
            <person name="Heathcott R."/>
            <person name="Holmes S.J."/>
            <person name="Howden P.J."/>
            <person name="Howe K.L."/>
            <person name="Howell G.R."/>
            <person name="Huckle E."/>
            <person name="Humphray S.J."/>
            <person name="Humphries M.D."/>
            <person name="Hunt A.R."/>
            <person name="Johnson C.M."/>
            <person name="Joy A.A."/>
            <person name="Kay M."/>
            <person name="Keenan S.J."/>
            <person name="Kimberley A.M."/>
            <person name="King A."/>
            <person name="Laird G.K."/>
            <person name="Langford C."/>
            <person name="Lawlor S."/>
            <person name="Leongamornlert D.A."/>
            <person name="Leversha M."/>
            <person name="Lloyd C.R."/>
            <person name="Lloyd D.M."/>
            <person name="Loveland J.E."/>
            <person name="Lovell J."/>
            <person name="Martin S."/>
            <person name="Mashreghi-Mohammadi M."/>
            <person name="Maslen G.L."/>
            <person name="Matthews L."/>
            <person name="McCann O.T."/>
            <person name="McLaren S.J."/>
            <person name="McLay K."/>
            <person name="McMurray A."/>
            <person name="Moore M.J.F."/>
            <person name="Mullikin J.C."/>
            <person name="Niblett D."/>
            <person name="Nickerson T."/>
            <person name="Novik K.L."/>
            <person name="Oliver K."/>
            <person name="Overton-Larty E.K."/>
            <person name="Parker A."/>
            <person name="Patel R."/>
            <person name="Pearce A.V."/>
            <person name="Peck A.I."/>
            <person name="Phillimore B.J.C.T."/>
            <person name="Phillips S."/>
            <person name="Plumb R.W."/>
            <person name="Porter K.M."/>
            <person name="Ramsey Y."/>
            <person name="Ranby S.A."/>
            <person name="Rice C.M."/>
            <person name="Ross M.T."/>
            <person name="Searle S.M."/>
            <person name="Sehra H.K."/>
            <person name="Sheridan E."/>
            <person name="Skuce C.D."/>
            <person name="Smith S."/>
            <person name="Smith M."/>
            <person name="Spraggon L."/>
            <person name="Squares S.L."/>
            <person name="Steward C.A."/>
            <person name="Sycamore N."/>
            <person name="Tamlyn-Hall G."/>
            <person name="Tester J."/>
            <person name="Theaker A.J."/>
            <person name="Thomas D.W."/>
            <person name="Thorpe A."/>
            <person name="Tracey A."/>
            <person name="Tromans A."/>
            <person name="Tubby B."/>
            <person name="Wall M."/>
            <person name="Wallis J.M."/>
            <person name="West A.P."/>
            <person name="White S.S."/>
            <person name="Whitehead S.L."/>
            <person name="Whittaker H."/>
            <person name="Wild A."/>
            <person name="Willey D.J."/>
            <person name="Wilmer T.E."/>
            <person name="Wood J.M."/>
            <person name="Wray P.W."/>
            <person name="Wyatt J.C."/>
            <person name="Young L."/>
            <person name="Younger R.M."/>
            <person name="Bentley D.R."/>
            <person name="Coulson A."/>
            <person name="Durbin R.M."/>
            <person name="Hubbard T."/>
            <person name="Sulston J.E."/>
            <person name="Dunham I."/>
            <person name="Rogers J."/>
            <person name="Beck S."/>
        </authorList>
    </citation>
    <scope>NUCLEOTIDE SEQUENCE [LARGE SCALE GENOMIC DNA]</scope>
</reference>
<reference key="6">
    <citation type="submission" date="2005-09" db="EMBL/GenBank/DDBJ databases">
        <authorList>
            <person name="Mural R.J."/>
            <person name="Istrail S."/>
            <person name="Sutton G.G."/>
            <person name="Florea L."/>
            <person name="Halpern A.L."/>
            <person name="Mobarry C.M."/>
            <person name="Lippert R."/>
            <person name="Walenz B."/>
            <person name="Shatkay H."/>
            <person name="Dew I."/>
            <person name="Miller J.R."/>
            <person name="Flanigan M.J."/>
            <person name="Edwards N.J."/>
            <person name="Bolanos R."/>
            <person name="Fasulo D."/>
            <person name="Halldorsson B.V."/>
            <person name="Hannenhalli S."/>
            <person name="Turner R."/>
            <person name="Yooseph S."/>
            <person name="Lu F."/>
            <person name="Nusskern D.R."/>
            <person name="Shue B.C."/>
            <person name="Zheng X.H."/>
            <person name="Zhong F."/>
            <person name="Delcher A.L."/>
            <person name="Huson D.H."/>
            <person name="Kravitz S.A."/>
            <person name="Mouchard L."/>
            <person name="Reinert K."/>
            <person name="Remington K.A."/>
            <person name="Clark A.G."/>
            <person name="Waterman M.S."/>
            <person name="Eichler E.E."/>
            <person name="Adams M.D."/>
            <person name="Hunkapiller M.W."/>
            <person name="Myers E.W."/>
            <person name="Venter J.C."/>
        </authorList>
    </citation>
    <scope>NUCLEOTIDE SEQUENCE [LARGE SCALE GENOMIC DNA]</scope>
</reference>
<reference key="7">
    <citation type="journal article" date="2004" name="Genome Res.">
        <title>The status, quality, and expansion of the NIH full-length cDNA project: the Mammalian Gene Collection (MGC).</title>
        <authorList>
            <consortium name="The MGC Project Team"/>
        </authorList>
    </citation>
    <scope>NUCLEOTIDE SEQUENCE [LARGE SCALE MRNA]</scope>
    <source>
        <tissue>Pancreas</tissue>
    </source>
</reference>
<evidence type="ECO:0000255" key="1">
    <source>
        <dbReference type="PROSITE-ProRule" id="PRU00981"/>
    </source>
</evidence>
<evidence type="ECO:0000256" key="2">
    <source>
        <dbReference type="SAM" id="MobiDB-lite"/>
    </source>
</evidence>
<evidence type="ECO:0000305" key="3"/>
<gene>
    <name type="primary">TCF21</name>
    <name type="synonym">BHLHA23</name>
    <name type="synonym">POD1</name>
</gene>
<feature type="chain" id="PRO_0000127464" description="Transcription factor 21">
    <location>
        <begin position="1"/>
        <end position="179"/>
    </location>
</feature>
<feature type="domain" description="bHLH" evidence="1">
    <location>
        <begin position="79"/>
        <end position="131"/>
    </location>
</feature>
<feature type="region of interest" description="Disordered" evidence="2">
    <location>
        <begin position="20"/>
        <end position="87"/>
    </location>
</feature>
<feature type="compositionally biased region" description="Low complexity" evidence="2">
    <location>
        <begin position="33"/>
        <end position="46"/>
    </location>
</feature>
<feature type="compositionally biased region" description="Polar residues" evidence="2">
    <location>
        <begin position="70"/>
        <end position="80"/>
    </location>
</feature>
<feature type="sequence conflict" description="In Ref. 2; AAC62514." evidence="3" ref="2">
    <original>K</original>
    <variation>R</variation>
    <location>
        <position position="61"/>
    </location>
</feature>
<feature type="sequence conflict" description="In Ref. 1; AAC62532." evidence="3" ref="1">
    <original>A</original>
    <variation>T</variation>
    <location>
        <position position="83"/>
    </location>
</feature>
<protein>
    <recommendedName>
        <fullName>Transcription factor 21</fullName>
        <shortName>TCF-21</shortName>
    </recommendedName>
    <alternativeName>
        <fullName>Capsulin</fullName>
    </alternativeName>
    <alternativeName>
        <fullName>Class A basic helix-loop-helix protein 23</fullName>
        <shortName>bHLHa23</shortName>
    </alternativeName>
    <alternativeName>
        <fullName>Epicardin</fullName>
    </alternativeName>
    <alternativeName>
        <fullName>Podocyte-expressed 1</fullName>
        <shortName>Pod-1</shortName>
    </alternativeName>
</protein>
<dbReference type="EMBL" id="AF047419">
    <property type="protein sequence ID" value="AAC62532.1"/>
    <property type="molecule type" value="mRNA"/>
</dbReference>
<dbReference type="EMBL" id="AF035718">
    <property type="protein sequence ID" value="AAC62514.1"/>
    <property type="molecule type" value="mRNA"/>
</dbReference>
<dbReference type="EMBL" id="BT019660">
    <property type="protein sequence ID" value="AAV38466.1"/>
    <property type="molecule type" value="mRNA"/>
</dbReference>
<dbReference type="EMBL" id="CR450293">
    <property type="protein sequence ID" value="CAG29289.1"/>
    <property type="molecule type" value="mRNA"/>
</dbReference>
<dbReference type="EMBL" id="AL356109">
    <property type="status" value="NOT_ANNOTATED_CDS"/>
    <property type="molecule type" value="Genomic_DNA"/>
</dbReference>
<dbReference type="EMBL" id="CH471051">
    <property type="protein sequence ID" value="EAW48000.1"/>
    <property type="molecule type" value="Genomic_DNA"/>
</dbReference>
<dbReference type="EMBL" id="CH471051">
    <property type="protein sequence ID" value="EAW48001.1"/>
    <property type="molecule type" value="Genomic_DNA"/>
</dbReference>
<dbReference type="EMBL" id="BC025697">
    <property type="protein sequence ID" value="AAH25697.1"/>
    <property type="molecule type" value="mRNA"/>
</dbReference>
<dbReference type="CCDS" id="CCDS5167.1"/>
<dbReference type="RefSeq" id="NP_003197.2">
    <property type="nucleotide sequence ID" value="NM_003206.3"/>
</dbReference>
<dbReference type="RefSeq" id="NP_938206.1">
    <property type="nucleotide sequence ID" value="NM_198392.3"/>
</dbReference>
<dbReference type="SMR" id="O43680"/>
<dbReference type="BioGRID" id="112803">
    <property type="interactions" value="12"/>
</dbReference>
<dbReference type="FunCoup" id="O43680">
    <property type="interactions" value="526"/>
</dbReference>
<dbReference type="IntAct" id="O43680">
    <property type="interactions" value="15"/>
</dbReference>
<dbReference type="MINT" id="O43680"/>
<dbReference type="STRING" id="9606.ENSP00000356857"/>
<dbReference type="iPTMnet" id="O43680"/>
<dbReference type="PhosphoSitePlus" id="O43680"/>
<dbReference type="BioMuta" id="TCF21"/>
<dbReference type="MassIVE" id="O43680"/>
<dbReference type="PaxDb" id="9606-ENSP00000356857"/>
<dbReference type="PeptideAtlas" id="O43680"/>
<dbReference type="ProteomicsDB" id="49110"/>
<dbReference type="Antibodypedia" id="19727">
    <property type="antibodies" value="159 antibodies from 24 providers"/>
</dbReference>
<dbReference type="DNASU" id="6943"/>
<dbReference type="Ensembl" id="ENST00000237316.3">
    <property type="protein sequence ID" value="ENSP00000237316.3"/>
    <property type="gene ID" value="ENSG00000118526.7"/>
</dbReference>
<dbReference type="Ensembl" id="ENST00000367882.5">
    <property type="protein sequence ID" value="ENSP00000356857.5"/>
    <property type="gene ID" value="ENSG00000118526.7"/>
</dbReference>
<dbReference type="GeneID" id="6943"/>
<dbReference type="KEGG" id="hsa:6943"/>
<dbReference type="MANE-Select" id="ENST00000367882.5">
    <property type="protein sequence ID" value="ENSP00000356857.5"/>
    <property type="RefSeq nucleotide sequence ID" value="NM_003206.4"/>
    <property type="RefSeq protein sequence ID" value="NP_003197.2"/>
</dbReference>
<dbReference type="UCSC" id="uc003qei.5">
    <property type="organism name" value="human"/>
</dbReference>
<dbReference type="AGR" id="HGNC:11632"/>
<dbReference type="CTD" id="6943"/>
<dbReference type="DisGeNET" id="6943"/>
<dbReference type="GeneCards" id="TCF21"/>
<dbReference type="HGNC" id="HGNC:11632">
    <property type="gene designation" value="TCF21"/>
</dbReference>
<dbReference type="HPA" id="ENSG00000118526">
    <property type="expression patterns" value="Tissue enhanced (lymphoid tissue, ovary, placenta)"/>
</dbReference>
<dbReference type="MIM" id="603306">
    <property type="type" value="gene"/>
</dbReference>
<dbReference type="neXtProt" id="NX_O43680"/>
<dbReference type="OpenTargets" id="ENSG00000118526"/>
<dbReference type="PharmGKB" id="PA36387"/>
<dbReference type="VEuPathDB" id="HostDB:ENSG00000118526"/>
<dbReference type="eggNOG" id="KOG4029">
    <property type="taxonomic scope" value="Eukaryota"/>
</dbReference>
<dbReference type="GeneTree" id="ENSGT00940000160174"/>
<dbReference type="HOGENOM" id="CLU_092663_0_0_1"/>
<dbReference type="InParanoid" id="O43680"/>
<dbReference type="OMA" id="CEGACAN"/>
<dbReference type="OrthoDB" id="6233288at2759"/>
<dbReference type="PAN-GO" id="O43680">
    <property type="GO annotations" value="4 GO annotations based on evolutionary models"/>
</dbReference>
<dbReference type="PhylomeDB" id="O43680"/>
<dbReference type="TreeFam" id="TF350742"/>
<dbReference type="PathwayCommons" id="O43680"/>
<dbReference type="SignaLink" id="O43680"/>
<dbReference type="BioGRID-ORCS" id="6943">
    <property type="hits" value="10 hits in 1168 CRISPR screens"/>
</dbReference>
<dbReference type="GeneWiki" id="TCF21_(gene)"/>
<dbReference type="GenomeRNAi" id="6943"/>
<dbReference type="Pharos" id="O43680">
    <property type="development level" value="Tbio"/>
</dbReference>
<dbReference type="PRO" id="PR:O43680"/>
<dbReference type="Proteomes" id="UP000005640">
    <property type="component" value="Chromosome 6"/>
</dbReference>
<dbReference type="RNAct" id="O43680">
    <property type="molecule type" value="protein"/>
</dbReference>
<dbReference type="Bgee" id="ENSG00000118526">
    <property type="expression patterns" value="Expressed in primordial germ cell in gonad and 115 other cell types or tissues"/>
</dbReference>
<dbReference type="GO" id="GO:0000785">
    <property type="term" value="C:chromatin"/>
    <property type="evidence" value="ECO:0000247"/>
    <property type="project" value="NTNU_SB"/>
</dbReference>
<dbReference type="GO" id="GO:0005654">
    <property type="term" value="C:nucleoplasm"/>
    <property type="evidence" value="ECO:0000314"/>
    <property type="project" value="HPA"/>
</dbReference>
<dbReference type="GO" id="GO:0005634">
    <property type="term" value="C:nucleus"/>
    <property type="evidence" value="ECO:0000314"/>
    <property type="project" value="UniProtKB"/>
</dbReference>
<dbReference type="GO" id="GO:0005667">
    <property type="term" value="C:transcription regulator complex"/>
    <property type="evidence" value="ECO:0007669"/>
    <property type="project" value="Ensembl"/>
</dbReference>
<dbReference type="GO" id="GO:0043425">
    <property type="term" value="F:bHLH transcription factor binding"/>
    <property type="evidence" value="ECO:0000353"/>
    <property type="project" value="UniProtKB"/>
</dbReference>
<dbReference type="GO" id="GO:0001228">
    <property type="term" value="F:DNA-binding transcription activator activity, RNA polymerase II-specific"/>
    <property type="evidence" value="ECO:0000250"/>
    <property type="project" value="UniProtKB"/>
</dbReference>
<dbReference type="GO" id="GO:0000981">
    <property type="term" value="F:DNA-binding transcription factor activity, RNA polymerase II-specific"/>
    <property type="evidence" value="ECO:0000247"/>
    <property type="project" value="NTNU_SB"/>
</dbReference>
<dbReference type="GO" id="GO:0001227">
    <property type="term" value="F:DNA-binding transcription repressor activity, RNA polymerase II-specific"/>
    <property type="evidence" value="ECO:0000314"/>
    <property type="project" value="UniProtKB"/>
</dbReference>
<dbReference type="GO" id="GO:0070888">
    <property type="term" value="F:E-box binding"/>
    <property type="evidence" value="ECO:0000250"/>
    <property type="project" value="BHF-UCL"/>
</dbReference>
<dbReference type="GO" id="GO:0042826">
    <property type="term" value="F:histone deacetylase binding"/>
    <property type="evidence" value="ECO:0007669"/>
    <property type="project" value="Ensembl"/>
</dbReference>
<dbReference type="GO" id="GO:0050681">
    <property type="term" value="F:nuclear androgen receptor binding"/>
    <property type="evidence" value="ECO:0000250"/>
    <property type="project" value="BHF-UCL"/>
</dbReference>
<dbReference type="GO" id="GO:0046983">
    <property type="term" value="F:protein dimerization activity"/>
    <property type="evidence" value="ECO:0007669"/>
    <property type="project" value="InterPro"/>
</dbReference>
<dbReference type="GO" id="GO:0000977">
    <property type="term" value="F:RNA polymerase II transcription regulatory region sequence-specific DNA binding"/>
    <property type="evidence" value="ECO:0000318"/>
    <property type="project" value="GO_Central"/>
</dbReference>
<dbReference type="GO" id="GO:1990837">
    <property type="term" value="F:sequence-specific double-stranded DNA binding"/>
    <property type="evidence" value="ECO:0000314"/>
    <property type="project" value="ARUK-UCL"/>
</dbReference>
<dbReference type="GO" id="GO:0001658">
    <property type="term" value="P:branching involved in ureteric bud morphogenesis"/>
    <property type="evidence" value="ECO:0000250"/>
    <property type="project" value="BHF-UCL"/>
</dbReference>
<dbReference type="GO" id="GO:0014707">
    <property type="term" value="P:branchiomeric skeletal muscle development"/>
    <property type="evidence" value="ECO:0000250"/>
    <property type="project" value="UniProtKB"/>
</dbReference>
<dbReference type="GO" id="GO:0060435">
    <property type="term" value="P:bronchiole development"/>
    <property type="evidence" value="ECO:0000250"/>
    <property type="project" value="UniProtKB"/>
</dbReference>
<dbReference type="GO" id="GO:0032502">
    <property type="term" value="P:developmental process"/>
    <property type="evidence" value="ECO:0000318"/>
    <property type="project" value="GO_Central"/>
</dbReference>
<dbReference type="GO" id="GO:0060539">
    <property type="term" value="P:diaphragm development"/>
    <property type="evidence" value="ECO:0000250"/>
    <property type="project" value="UniProtKB"/>
</dbReference>
<dbReference type="GO" id="GO:0048557">
    <property type="term" value="P:embryonic digestive tract morphogenesis"/>
    <property type="evidence" value="ECO:0000250"/>
    <property type="project" value="UniProtKB"/>
</dbReference>
<dbReference type="GO" id="GO:0030855">
    <property type="term" value="P:epithelial cell differentiation"/>
    <property type="evidence" value="ECO:0000250"/>
    <property type="project" value="UniProtKB"/>
</dbReference>
<dbReference type="GO" id="GO:0048732">
    <property type="term" value="P:gland development"/>
    <property type="evidence" value="ECO:0000250"/>
    <property type="project" value="UniProtKB"/>
</dbReference>
<dbReference type="GO" id="GO:0032835">
    <property type="term" value="P:glomerulus development"/>
    <property type="evidence" value="ECO:0000250"/>
    <property type="project" value="UniProtKB"/>
</dbReference>
<dbReference type="GO" id="GO:0001822">
    <property type="term" value="P:kidney development"/>
    <property type="evidence" value="ECO:0000250"/>
    <property type="project" value="BHF-UCL"/>
</dbReference>
<dbReference type="GO" id="GO:0048286">
    <property type="term" value="P:lung alveolus development"/>
    <property type="evidence" value="ECO:0000250"/>
    <property type="project" value="UniProtKB"/>
</dbReference>
<dbReference type="GO" id="GO:0060425">
    <property type="term" value="P:lung morphogenesis"/>
    <property type="evidence" value="ECO:0000250"/>
    <property type="project" value="UniProtKB"/>
</dbReference>
<dbReference type="GO" id="GO:0060426">
    <property type="term" value="P:lung vasculature development"/>
    <property type="evidence" value="ECO:0000250"/>
    <property type="project" value="UniProtKB"/>
</dbReference>
<dbReference type="GO" id="GO:0072277">
    <property type="term" value="P:metanephric glomerular capillary formation"/>
    <property type="evidence" value="ECO:0000250"/>
    <property type="project" value="UniProtKB"/>
</dbReference>
<dbReference type="GO" id="GO:0072162">
    <property type="term" value="P:metanephric mesenchymal cell differentiation"/>
    <property type="evidence" value="ECO:0000250"/>
    <property type="project" value="UniProtKB"/>
</dbReference>
<dbReference type="GO" id="GO:0001763">
    <property type="term" value="P:morphogenesis of a branching structure"/>
    <property type="evidence" value="ECO:0000250"/>
    <property type="project" value="BHF-UCL"/>
</dbReference>
<dbReference type="GO" id="GO:0060766">
    <property type="term" value="P:negative regulation of androgen receptor signaling pathway"/>
    <property type="evidence" value="ECO:0000250"/>
    <property type="project" value="BHF-UCL"/>
</dbReference>
<dbReference type="GO" id="GO:0000122">
    <property type="term" value="P:negative regulation of transcription by RNA polymerase II"/>
    <property type="evidence" value="ECO:0000314"/>
    <property type="project" value="UniProtKB"/>
</dbReference>
<dbReference type="GO" id="GO:0045944">
    <property type="term" value="P:positive regulation of transcription by RNA polymerase II"/>
    <property type="evidence" value="ECO:0000250"/>
    <property type="project" value="UniProtKB"/>
</dbReference>
<dbReference type="GO" id="GO:0006357">
    <property type="term" value="P:regulation of transcription by RNA polymerase II"/>
    <property type="evidence" value="ECO:0000318"/>
    <property type="project" value="GO_Central"/>
</dbReference>
<dbReference type="GO" id="GO:0048608">
    <property type="term" value="P:reproductive structure development"/>
    <property type="evidence" value="ECO:0000250"/>
    <property type="project" value="UniProtKB"/>
</dbReference>
<dbReference type="GO" id="GO:0060541">
    <property type="term" value="P:respiratory system development"/>
    <property type="evidence" value="ECO:0000250"/>
    <property type="project" value="UniProtKB"/>
</dbReference>
<dbReference type="GO" id="GO:0060021">
    <property type="term" value="P:roof of mouth development"/>
    <property type="evidence" value="ECO:0000250"/>
    <property type="project" value="UniProtKB"/>
</dbReference>
<dbReference type="GO" id="GO:0060008">
    <property type="term" value="P:Sertoli cell differentiation"/>
    <property type="evidence" value="ECO:0000250"/>
    <property type="project" value="UniProtKB"/>
</dbReference>
<dbReference type="GO" id="GO:0007530">
    <property type="term" value="P:sex determination"/>
    <property type="evidence" value="ECO:0000250"/>
    <property type="project" value="UniProtKB"/>
</dbReference>
<dbReference type="GO" id="GO:0048536">
    <property type="term" value="P:spleen development"/>
    <property type="evidence" value="ECO:0000250"/>
    <property type="project" value="UniProtKB"/>
</dbReference>
<dbReference type="GO" id="GO:0001657">
    <property type="term" value="P:ureteric bud development"/>
    <property type="evidence" value="ECO:0000250"/>
    <property type="project" value="BHF-UCL"/>
</dbReference>
<dbReference type="GO" id="GO:0001944">
    <property type="term" value="P:vasculature development"/>
    <property type="evidence" value="ECO:0000250"/>
    <property type="project" value="BHF-UCL"/>
</dbReference>
<dbReference type="CDD" id="cd19704">
    <property type="entry name" value="bHLH_TS_TCF21_capsulin"/>
    <property type="match status" value="1"/>
</dbReference>
<dbReference type="FunFam" id="4.10.280.10:FF:000010">
    <property type="entry name" value="Scleraxis bHLH transcription factor"/>
    <property type="match status" value="1"/>
</dbReference>
<dbReference type="Gene3D" id="4.10.280.10">
    <property type="entry name" value="Helix-loop-helix DNA-binding domain"/>
    <property type="match status" value="1"/>
</dbReference>
<dbReference type="InterPro" id="IPR011598">
    <property type="entry name" value="bHLH_dom"/>
</dbReference>
<dbReference type="InterPro" id="IPR050283">
    <property type="entry name" value="E-box_TF_Regulators"/>
</dbReference>
<dbReference type="InterPro" id="IPR036638">
    <property type="entry name" value="HLH_DNA-bd_sf"/>
</dbReference>
<dbReference type="PANTHER" id="PTHR23349">
    <property type="entry name" value="BASIC HELIX-LOOP-HELIX TRANSCRIPTION FACTOR, TWIST"/>
    <property type="match status" value="1"/>
</dbReference>
<dbReference type="PANTHER" id="PTHR23349:SF67">
    <property type="entry name" value="TRANSCRIPTION FACTOR 21"/>
    <property type="match status" value="1"/>
</dbReference>
<dbReference type="Pfam" id="PF00010">
    <property type="entry name" value="HLH"/>
    <property type="match status" value="1"/>
</dbReference>
<dbReference type="SMART" id="SM00353">
    <property type="entry name" value="HLH"/>
    <property type="match status" value="1"/>
</dbReference>
<dbReference type="SUPFAM" id="SSF47459">
    <property type="entry name" value="HLH, helix-loop-helix DNA-binding domain"/>
    <property type="match status" value="1"/>
</dbReference>
<dbReference type="PROSITE" id="PS50888">
    <property type="entry name" value="BHLH"/>
    <property type="match status" value="1"/>
</dbReference>